<accession>A2BDG0</accession>
<feature type="signal peptide" evidence="2">
    <location>
        <begin position="1"/>
        <end position="24"/>
    </location>
</feature>
<feature type="chain" id="PRO_0000320172" description="Shadow of prion protein">
    <location>
        <begin position="25"/>
        <end position="104"/>
    </location>
</feature>
<feature type="propeptide" id="PRO_0000320173" description="Removed in mature form" evidence="2">
    <location>
        <begin position="105"/>
        <end position="117"/>
    </location>
</feature>
<feature type="lipid moiety-binding region" description="GPI-anchor amidated alanine" evidence="2">
    <location>
        <position position="104"/>
    </location>
</feature>
<feature type="glycosylation site" description="N-linked (GlcNAc...) asparagine" evidence="2">
    <location>
        <position position="87"/>
    </location>
</feature>
<organism>
    <name type="scientific">Gallus gallus</name>
    <name type="common">Chicken</name>
    <dbReference type="NCBI Taxonomy" id="9031"/>
    <lineage>
        <taxon>Eukaryota</taxon>
        <taxon>Metazoa</taxon>
        <taxon>Chordata</taxon>
        <taxon>Craniata</taxon>
        <taxon>Vertebrata</taxon>
        <taxon>Euteleostomi</taxon>
        <taxon>Archelosauria</taxon>
        <taxon>Archosauria</taxon>
        <taxon>Dinosauria</taxon>
        <taxon>Saurischia</taxon>
        <taxon>Theropoda</taxon>
        <taxon>Coelurosauria</taxon>
        <taxon>Aves</taxon>
        <taxon>Neognathae</taxon>
        <taxon>Galloanserae</taxon>
        <taxon>Galliformes</taxon>
        <taxon>Phasianidae</taxon>
        <taxon>Phasianinae</taxon>
        <taxon>Gallus</taxon>
    </lineage>
</organism>
<comment type="function">
    <text evidence="1">Prion-like protein that has PrP(C)-like neuroprotective activity.</text>
</comment>
<comment type="subcellular location">
    <subcellularLocation>
        <location evidence="1">Cell membrane</location>
        <topology evidence="1">Lipid-anchor</topology>
        <topology evidence="1">GPI-anchor</topology>
    </subcellularLocation>
</comment>
<comment type="similarity">
    <text evidence="3">Belongs to the SPRN family.</text>
</comment>
<evidence type="ECO:0000250" key="1"/>
<evidence type="ECO:0000255" key="2"/>
<evidence type="ECO:0000305" key="3"/>
<sequence>MRQRVACCWVLLLLAATFCQPAAAKGGRGGSRGAARGMARGAARSRHRGLPRYGGALRVAAAAAAAGAAAGAALHQARAETEYHEGNGTAWTSVAPGWVEWGWAMPWLCPLAAILHH</sequence>
<gene>
    <name type="primary">SPRN</name>
</gene>
<name>SPRN_CHICK</name>
<reference key="1">
    <citation type="journal article" date="2005" name="Genome Res.">
        <title>Transcriptome analysis for the chicken based on 19,626 finished cDNA sequences and 485,337 expressed sequence tags.</title>
        <authorList>
            <person name="Hubbard S.J."/>
            <person name="Grafham D.V."/>
            <person name="Beattie K.J."/>
            <person name="Overton I.M."/>
            <person name="McLaren S.R."/>
            <person name="Croning M.D.R."/>
            <person name="Boardman P.E."/>
            <person name="Bonfield J.K."/>
            <person name="Burnside J."/>
            <person name="Davies R.M."/>
            <person name="Farrell E.R."/>
            <person name="Francis M.D."/>
            <person name="Griffiths-Jones S."/>
            <person name="Humphray S.J."/>
            <person name="Hyland C."/>
            <person name="Scott C.E."/>
            <person name="Tang H."/>
            <person name="Taylor R.G."/>
            <person name="Tickle C."/>
            <person name="Brown W.R.A."/>
            <person name="Birney E."/>
            <person name="Rogers J."/>
            <person name="Wilson S.A."/>
        </authorList>
    </citation>
    <scope>NUCLEOTIDE SEQUENCE [LARGE SCALE MRNA]</scope>
</reference>
<reference key="2">
    <citation type="journal article" date="2007" name="BMC Genomics">
        <title>Comparative genomic analysis of prion genes.</title>
        <authorList>
            <person name="Premzl M."/>
            <person name="Gamulin V."/>
        </authorList>
    </citation>
    <scope>IDENTIFICATION</scope>
</reference>
<proteinExistence type="inferred from homology"/>
<protein>
    <recommendedName>
        <fullName>Shadow of prion protein</fullName>
        <shortName>Protein shadoo</shortName>
    </recommendedName>
</protein>
<keyword id="KW-0034">Amyloid</keyword>
<keyword id="KW-1003">Cell membrane</keyword>
<keyword id="KW-0325">Glycoprotein</keyword>
<keyword id="KW-0336">GPI-anchor</keyword>
<keyword id="KW-0449">Lipoprotein</keyword>
<keyword id="KW-0472">Membrane</keyword>
<keyword id="KW-0640">Prion</keyword>
<keyword id="KW-1185">Reference proteome</keyword>
<keyword id="KW-0732">Signal</keyword>
<dbReference type="EMBL" id="CR390504">
    <property type="status" value="NOT_ANNOTATED_CDS"/>
    <property type="molecule type" value="mRNA"/>
</dbReference>
<dbReference type="EMBL" id="BN000836">
    <property type="protein sequence ID" value="CAJ43796.1"/>
    <property type="molecule type" value="Genomic_DNA"/>
</dbReference>
<dbReference type="STRING" id="9031.ENSGALP00000044466"/>
<dbReference type="GlyCosmos" id="A2BDG0">
    <property type="glycosylation" value="1 site, No reported glycans"/>
</dbReference>
<dbReference type="GlyGen" id="A2BDG0">
    <property type="glycosylation" value="1 site"/>
</dbReference>
<dbReference type="Ensembl" id="ENSGALT00010056763.1">
    <property type="protein sequence ID" value="ENSGALP00010034505.1"/>
    <property type="gene ID" value="ENSGALG00010023278.1"/>
</dbReference>
<dbReference type="InParanoid" id="A2BDG0"/>
<dbReference type="Reactome" id="R-GGA-163125">
    <property type="pathway name" value="Post-translational modification: synthesis of GPI-anchored proteins"/>
</dbReference>
<dbReference type="PRO" id="PR:A2BDG0"/>
<dbReference type="Proteomes" id="UP000000539">
    <property type="component" value="Chromosome 6"/>
</dbReference>
<dbReference type="Bgee" id="ENSGALG00000029823">
    <property type="expression patterns" value="Expressed in heart and 11 other cell types or tissues"/>
</dbReference>
<dbReference type="GO" id="GO:0005634">
    <property type="term" value="C:nucleus"/>
    <property type="evidence" value="ECO:0000318"/>
    <property type="project" value="GO_Central"/>
</dbReference>
<dbReference type="GO" id="GO:0005886">
    <property type="term" value="C:plasma membrane"/>
    <property type="evidence" value="ECO:0007669"/>
    <property type="project" value="UniProtKB-SubCell"/>
</dbReference>
<dbReference type="GO" id="GO:0098552">
    <property type="term" value="C:side of membrane"/>
    <property type="evidence" value="ECO:0007669"/>
    <property type="project" value="UniProtKB-KW"/>
</dbReference>
<dbReference type="GO" id="GO:0003676">
    <property type="term" value="F:nucleic acid binding"/>
    <property type="evidence" value="ECO:0000318"/>
    <property type="project" value="GO_Central"/>
</dbReference>
<dbReference type="GO" id="GO:0006606">
    <property type="term" value="P:protein import into nucleus"/>
    <property type="evidence" value="ECO:0000318"/>
    <property type="project" value="GO_Central"/>
</dbReference>
<dbReference type="InterPro" id="IPR029238">
    <property type="entry name" value="Shadoo"/>
</dbReference>
<dbReference type="PANTHER" id="PTHR28552">
    <property type="entry name" value="SHADOW OF PRION PROTEIN"/>
    <property type="match status" value="1"/>
</dbReference>
<dbReference type="PANTHER" id="PTHR28552:SF1">
    <property type="entry name" value="SHADOW OF PRION PROTEIN"/>
    <property type="match status" value="1"/>
</dbReference>
<dbReference type="Pfam" id="PF14999">
    <property type="entry name" value="Shadoo"/>
    <property type="match status" value="1"/>
</dbReference>